<organism>
    <name type="scientific">Rhizobium meliloti (strain 1021)</name>
    <name type="common">Ensifer meliloti</name>
    <name type="synonym">Sinorhizobium meliloti</name>
    <dbReference type="NCBI Taxonomy" id="266834"/>
    <lineage>
        <taxon>Bacteria</taxon>
        <taxon>Pseudomonadati</taxon>
        <taxon>Pseudomonadota</taxon>
        <taxon>Alphaproteobacteria</taxon>
        <taxon>Hyphomicrobiales</taxon>
        <taxon>Rhizobiaceae</taxon>
        <taxon>Sinorhizobium/Ensifer group</taxon>
        <taxon>Sinorhizobium</taxon>
    </lineage>
</organism>
<feature type="chain" id="PRO_0000134905" description="Molybdenum cofactor guanylyltransferase">
    <location>
        <begin position="1"/>
        <end position="218"/>
    </location>
</feature>
<feature type="binding site" evidence="1">
    <location>
        <begin position="16"/>
        <end position="18"/>
    </location>
    <ligand>
        <name>GTP</name>
        <dbReference type="ChEBI" id="CHEBI:37565"/>
    </ligand>
</feature>
<feature type="binding site" evidence="1">
    <location>
        <position position="28"/>
    </location>
    <ligand>
        <name>GTP</name>
        <dbReference type="ChEBI" id="CHEBI:37565"/>
    </ligand>
</feature>
<feature type="binding site" evidence="1">
    <location>
        <position position="56"/>
    </location>
    <ligand>
        <name>GTP</name>
        <dbReference type="ChEBI" id="CHEBI:37565"/>
    </ligand>
</feature>
<feature type="binding site" evidence="1">
    <location>
        <position position="74"/>
    </location>
    <ligand>
        <name>GTP</name>
        <dbReference type="ChEBI" id="CHEBI:37565"/>
    </ligand>
</feature>
<feature type="binding site" evidence="1">
    <location>
        <position position="109"/>
    </location>
    <ligand>
        <name>GTP</name>
        <dbReference type="ChEBI" id="CHEBI:37565"/>
    </ligand>
</feature>
<feature type="binding site" evidence="1">
    <location>
        <position position="109"/>
    </location>
    <ligand>
        <name>Mg(2+)</name>
        <dbReference type="ChEBI" id="CHEBI:18420"/>
    </ligand>
</feature>
<protein>
    <recommendedName>
        <fullName evidence="1">Molybdenum cofactor guanylyltransferase</fullName>
        <shortName evidence="1">MoCo guanylyltransferase</shortName>
        <ecNumber evidence="1">2.7.7.77</ecNumber>
    </recommendedName>
    <alternativeName>
        <fullName evidence="1">GTP:molybdopterin guanylyltransferase</fullName>
    </alternativeName>
    <alternativeName>
        <fullName evidence="1">Mo-MPT guanylyltransferase</fullName>
    </alternativeName>
    <alternativeName>
        <fullName evidence="1">Molybdopterin guanylyltransferase</fullName>
    </alternativeName>
    <alternativeName>
        <fullName evidence="1">Molybdopterin-guanine dinucleotide synthase</fullName>
        <shortName evidence="1">MGD synthase</shortName>
    </alternativeName>
</protein>
<evidence type="ECO:0000255" key="1">
    <source>
        <dbReference type="HAMAP-Rule" id="MF_00316"/>
    </source>
</evidence>
<comment type="function">
    <text evidence="1">Transfers a GMP moiety from GTP to Mo-molybdopterin (Mo-MPT) cofactor (Moco or molybdenum cofactor) to form Mo-molybdopterin guanine dinucleotide (Mo-MGD) cofactor.</text>
</comment>
<comment type="catalytic activity">
    <reaction evidence="1">
        <text>Mo-molybdopterin + GTP + H(+) = Mo-molybdopterin guanine dinucleotide + diphosphate</text>
        <dbReference type="Rhea" id="RHEA:34243"/>
        <dbReference type="ChEBI" id="CHEBI:15378"/>
        <dbReference type="ChEBI" id="CHEBI:33019"/>
        <dbReference type="ChEBI" id="CHEBI:37565"/>
        <dbReference type="ChEBI" id="CHEBI:71302"/>
        <dbReference type="ChEBI" id="CHEBI:71310"/>
        <dbReference type="EC" id="2.7.7.77"/>
    </reaction>
</comment>
<comment type="cofactor">
    <cofactor evidence="1">
        <name>Mg(2+)</name>
        <dbReference type="ChEBI" id="CHEBI:18420"/>
    </cofactor>
</comment>
<comment type="subunit">
    <text evidence="1">Monomer.</text>
</comment>
<comment type="subcellular location">
    <subcellularLocation>
        <location evidence="1">Cytoplasm</location>
    </subcellularLocation>
</comment>
<comment type="domain">
    <text evidence="1">The N-terminal domain determines nucleotide recognition and specific binding, while the C-terminal domain determines the specific binding to the target protein.</text>
</comment>
<comment type="similarity">
    <text evidence="1">Belongs to the MobA family.</text>
</comment>
<name>MOBA_RHIME</name>
<reference key="1">
    <citation type="journal article" date="2001" name="Proc. Natl. Acad. Sci. U.S.A.">
        <title>Analysis of the chromosome sequence of the legume symbiont Sinorhizobium meliloti strain 1021.</title>
        <authorList>
            <person name="Capela D."/>
            <person name="Barloy-Hubler F."/>
            <person name="Gouzy J."/>
            <person name="Bothe G."/>
            <person name="Ampe F."/>
            <person name="Batut J."/>
            <person name="Boistard P."/>
            <person name="Becker A."/>
            <person name="Boutry M."/>
            <person name="Cadieu E."/>
            <person name="Dreano S."/>
            <person name="Gloux S."/>
            <person name="Godrie T."/>
            <person name="Goffeau A."/>
            <person name="Kahn D."/>
            <person name="Kiss E."/>
            <person name="Lelaure V."/>
            <person name="Masuy D."/>
            <person name="Pohl T."/>
            <person name="Portetelle D."/>
            <person name="Puehler A."/>
            <person name="Purnelle B."/>
            <person name="Ramsperger U."/>
            <person name="Renard C."/>
            <person name="Thebault P."/>
            <person name="Vandenbol M."/>
            <person name="Weidner S."/>
            <person name="Galibert F."/>
        </authorList>
    </citation>
    <scope>NUCLEOTIDE SEQUENCE [LARGE SCALE GENOMIC DNA]</scope>
    <source>
        <strain>1021</strain>
    </source>
</reference>
<reference key="2">
    <citation type="journal article" date="2001" name="Science">
        <title>The composite genome of the legume symbiont Sinorhizobium meliloti.</title>
        <authorList>
            <person name="Galibert F."/>
            <person name="Finan T.M."/>
            <person name="Long S.R."/>
            <person name="Puehler A."/>
            <person name="Abola P."/>
            <person name="Ampe F."/>
            <person name="Barloy-Hubler F."/>
            <person name="Barnett M.J."/>
            <person name="Becker A."/>
            <person name="Boistard P."/>
            <person name="Bothe G."/>
            <person name="Boutry M."/>
            <person name="Bowser L."/>
            <person name="Buhrmester J."/>
            <person name="Cadieu E."/>
            <person name="Capela D."/>
            <person name="Chain P."/>
            <person name="Cowie A."/>
            <person name="Davis R.W."/>
            <person name="Dreano S."/>
            <person name="Federspiel N.A."/>
            <person name="Fisher R.F."/>
            <person name="Gloux S."/>
            <person name="Godrie T."/>
            <person name="Goffeau A."/>
            <person name="Golding B."/>
            <person name="Gouzy J."/>
            <person name="Gurjal M."/>
            <person name="Hernandez-Lucas I."/>
            <person name="Hong A."/>
            <person name="Huizar L."/>
            <person name="Hyman R.W."/>
            <person name="Jones T."/>
            <person name="Kahn D."/>
            <person name="Kahn M.L."/>
            <person name="Kalman S."/>
            <person name="Keating D.H."/>
            <person name="Kiss E."/>
            <person name="Komp C."/>
            <person name="Lelaure V."/>
            <person name="Masuy D."/>
            <person name="Palm C."/>
            <person name="Peck M.C."/>
            <person name="Pohl T.M."/>
            <person name="Portetelle D."/>
            <person name="Purnelle B."/>
            <person name="Ramsperger U."/>
            <person name="Surzycki R."/>
            <person name="Thebault P."/>
            <person name="Vandenbol M."/>
            <person name="Vorhoelter F.J."/>
            <person name="Weidner S."/>
            <person name="Wells D.H."/>
            <person name="Wong K."/>
            <person name="Yeh K.-C."/>
            <person name="Batut J."/>
        </authorList>
    </citation>
    <scope>NUCLEOTIDE SEQUENCE [LARGE SCALE GENOMIC DNA]</scope>
    <source>
        <strain>1021</strain>
    </source>
</reference>
<proteinExistence type="inferred from homology"/>
<sequence length="218" mass="23198">MTGAPSHATFPPAVILAGGLSSRMGRPKAGLVLGGRSMLTRVIERLRPQVAGIAINLNADPDPASAFGLEVVPDTIPGFVGPLAGILAAMRHTVRKSPGASHVLTVPVDTPLFPKSLAARLKTAITSGGEIAVAFSAGEMHPLFALWPVALADDLEAWIHADEKRRVRAFIARHESATVEFPLIPTAAGPLDPFFNINTPEELRQAEAWLPYLEDREP</sequence>
<gene>
    <name evidence="1" type="primary">mobA</name>
    <name type="ordered locus">R01866</name>
    <name type="ORF">SMc00143</name>
</gene>
<dbReference type="EC" id="2.7.7.77" evidence="1"/>
<dbReference type="EMBL" id="AL591688">
    <property type="protein sequence ID" value="CAC46445.1"/>
    <property type="molecule type" value="Genomic_DNA"/>
</dbReference>
<dbReference type="RefSeq" id="NP_385972.1">
    <property type="nucleotide sequence ID" value="NC_003047.1"/>
</dbReference>
<dbReference type="RefSeq" id="WP_010969527.1">
    <property type="nucleotide sequence ID" value="NC_003047.1"/>
</dbReference>
<dbReference type="SMR" id="Q92PB2"/>
<dbReference type="EnsemblBacteria" id="CAC46445">
    <property type="protein sequence ID" value="CAC46445"/>
    <property type="gene ID" value="SMc00143"/>
</dbReference>
<dbReference type="KEGG" id="sme:SMc00143"/>
<dbReference type="PATRIC" id="fig|266834.11.peg.3310"/>
<dbReference type="eggNOG" id="COG0746">
    <property type="taxonomic scope" value="Bacteria"/>
</dbReference>
<dbReference type="HOGENOM" id="CLU_055597_5_0_5"/>
<dbReference type="OrthoDB" id="9788394at2"/>
<dbReference type="Proteomes" id="UP000001976">
    <property type="component" value="Chromosome"/>
</dbReference>
<dbReference type="GO" id="GO:0005737">
    <property type="term" value="C:cytoplasm"/>
    <property type="evidence" value="ECO:0007669"/>
    <property type="project" value="UniProtKB-SubCell"/>
</dbReference>
<dbReference type="GO" id="GO:0005525">
    <property type="term" value="F:GTP binding"/>
    <property type="evidence" value="ECO:0007669"/>
    <property type="project" value="UniProtKB-UniRule"/>
</dbReference>
<dbReference type="GO" id="GO:0046872">
    <property type="term" value="F:metal ion binding"/>
    <property type="evidence" value="ECO:0007669"/>
    <property type="project" value="UniProtKB-KW"/>
</dbReference>
<dbReference type="GO" id="GO:0061603">
    <property type="term" value="F:molybdenum cofactor guanylyltransferase activity"/>
    <property type="evidence" value="ECO:0007669"/>
    <property type="project" value="UniProtKB-EC"/>
</dbReference>
<dbReference type="GO" id="GO:1902758">
    <property type="term" value="P:bis(molybdopterin guanine dinucleotide)molybdenum biosynthetic process"/>
    <property type="evidence" value="ECO:0007669"/>
    <property type="project" value="TreeGrafter"/>
</dbReference>
<dbReference type="CDD" id="cd02503">
    <property type="entry name" value="MobA"/>
    <property type="match status" value="1"/>
</dbReference>
<dbReference type="Gene3D" id="3.90.550.10">
    <property type="entry name" value="Spore Coat Polysaccharide Biosynthesis Protein SpsA, Chain A"/>
    <property type="match status" value="1"/>
</dbReference>
<dbReference type="HAMAP" id="MF_00316">
    <property type="entry name" value="MobA"/>
    <property type="match status" value="1"/>
</dbReference>
<dbReference type="InterPro" id="IPR025877">
    <property type="entry name" value="MobA-like_NTP_Trfase"/>
</dbReference>
<dbReference type="InterPro" id="IPR013482">
    <property type="entry name" value="Molybde_CF_guanTrfase"/>
</dbReference>
<dbReference type="InterPro" id="IPR029044">
    <property type="entry name" value="Nucleotide-diphossugar_trans"/>
</dbReference>
<dbReference type="NCBIfam" id="TIGR02665">
    <property type="entry name" value="molyb_mobA"/>
    <property type="match status" value="1"/>
</dbReference>
<dbReference type="PANTHER" id="PTHR19136">
    <property type="entry name" value="MOLYBDENUM COFACTOR GUANYLYLTRANSFERASE"/>
    <property type="match status" value="1"/>
</dbReference>
<dbReference type="PANTHER" id="PTHR19136:SF81">
    <property type="entry name" value="MOLYBDENUM COFACTOR GUANYLYLTRANSFERASE"/>
    <property type="match status" value="1"/>
</dbReference>
<dbReference type="Pfam" id="PF12804">
    <property type="entry name" value="NTP_transf_3"/>
    <property type="match status" value="1"/>
</dbReference>
<dbReference type="SUPFAM" id="SSF53448">
    <property type="entry name" value="Nucleotide-diphospho-sugar transferases"/>
    <property type="match status" value="1"/>
</dbReference>
<accession>Q92PB2</accession>
<keyword id="KW-0963">Cytoplasm</keyword>
<keyword id="KW-0342">GTP-binding</keyword>
<keyword id="KW-0460">Magnesium</keyword>
<keyword id="KW-0479">Metal-binding</keyword>
<keyword id="KW-0501">Molybdenum cofactor biosynthesis</keyword>
<keyword id="KW-0547">Nucleotide-binding</keyword>
<keyword id="KW-1185">Reference proteome</keyword>
<keyword id="KW-0808">Transferase</keyword>